<organism>
    <name type="scientific">Homo sapiens</name>
    <name type="common">Human</name>
    <dbReference type="NCBI Taxonomy" id="9606"/>
    <lineage>
        <taxon>Eukaryota</taxon>
        <taxon>Metazoa</taxon>
        <taxon>Chordata</taxon>
        <taxon>Craniata</taxon>
        <taxon>Vertebrata</taxon>
        <taxon>Euteleostomi</taxon>
        <taxon>Mammalia</taxon>
        <taxon>Eutheria</taxon>
        <taxon>Euarchontoglires</taxon>
        <taxon>Primates</taxon>
        <taxon>Haplorrhini</taxon>
        <taxon>Catarrhini</taxon>
        <taxon>Hominidae</taxon>
        <taxon>Homo</taxon>
    </lineage>
</organism>
<proteinExistence type="evidence at transcript level"/>
<evidence type="ECO:0000250" key="1"/>
<evidence type="ECO:0000255" key="2">
    <source>
        <dbReference type="PROSITE-ProRule" id="PRU00286"/>
    </source>
</evidence>
<evidence type="ECO:0000256" key="3">
    <source>
        <dbReference type="SAM" id="MobiDB-lite"/>
    </source>
</evidence>
<evidence type="ECO:0000303" key="4">
    <source>
    </source>
</evidence>
<feature type="chain" id="PRO_0000071057" description="DnaJ homolog subfamily C member 5G">
    <location>
        <begin position="1"/>
        <end position="189"/>
    </location>
</feature>
<feature type="domain" description="J" evidence="2">
    <location>
        <begin position="17"/>
        <end position="98"/>
    </location>
</feature>
<feature type="region of interest" description="Disordered" evidence="3">
    <location>
        <begin position="154"/>
        <end position="189"/>
    </location>
</feature>
<feature type="compositionally biased region" description="Polar residues" evidence="3">
    <location>
        <begin position="161"/>
        <end position="171"/>
    </location>
</feature>
<feature type="splice variant" id="VSP_056967" description="In isoform 2." evidence="4">
    <original>SHSALLPHPPFEYHLGRKLALRYHPDKNPGNAQAAEIFKEINAAHAILSDSKKRKIYDQHGSLGIYL</original>
    <variation>RHLSSCVLCSLVAVSVVAAVFAVEHLNHHLSRIVGENISRMSRVSLQGQEPNVILEARKIAKMIFKR</variation>
    <location>
        <begin position="38"/>
        <end position="104"/>
    </location>
</feature>
<feature type="splice variant" id="VSP_056968" description="In isoform 2." evidence="4">
    <location>
        <begin position="105"/>
        <end position="189"/>
    </location>
</feature>
<feature type="sequence variant" id="VAR_033882" description="In dbSNP:rs17005979.">
    <original>V</original>
    <variation>G</variation>
    <location>
        <position position="4"/>
    </location>
</feature>
<feature type="sequence variant" id="VAR_033883" description="In dbSNP:rs13414011.">
    <original>H</original>
    <variation>R</variation>
    <location>
        <position position="51"/>
    </location>
</feature>
<accession>Q8N7S2</accession>
<accession>B4DY29</accession>
<accession>Q53SY5</accession>
<accession>Q8IYQ4</accession>
<accession>Q96RJ8</accession>
<name>DNJ5G_HUMAN</name>
<comment type="subcellular location">
    <subcellularLocation>
        <location evidence="1">Membrane</location>
        <topology evidence="1">Lipid-anchor</topology>
    </subcellularLocation>
</comment>
<comment type="alternative products">
    <event type="alternative splicing"/>
    <isoform>
        <id>Q8N7S2-1</id>
        <name>1</name>
        <sequence type="displayed"/>
    </isoform>
    <isoform>
        <id>Q8N7S2-2</id>
        <name>2</name>
        <sequence type="described" ref="VSP_056967 VSP_056968"/>
    </isoform>
</comment>
<comment type="tissue specificity">
    <text>Testis specific.</text>
</comment>
<comment type="PTM">
    <text evidence="1">Palmitoylated.</text>
</comment>
<sequence length="189" mass="21433">MSTVKEAAHRLSKSEMSLYAVLDLKKGASPEDFKKSYSHSALLPHPPFEYHLGRKLALRYHPDKNPGNAQAAEIFKEINAAHAILSDSKKRKIYDQHGSLGIYLYDHFGEEGVRYYFILNSCWFKTLVILCTLLTCCCFCCCCCFCCGALKPPPEQDSGRKYQQNVQSQPPRSGAKCDFRSEENSEDDF</sequence>
<keyword id="KW-0025">Alternative splicing</keyword>
<keyword id="KW-0143">Chaperone</keyword>
<keyword id="KW-0449">Lipoprotein</keyword>
<keyword id="KW-0472">Membrane</keyword>
<keyword id="KW-0564">Palmitate</keyword>
<keyword id="KW-1185">Reference proteome</keyword>
<reference key="1">
    <citation type="journal article" date="2004" name="Nat. Genet.">
        <title>Complete sequencing and characterization of 21,243 full-length human cDNAs.</title>
        <authorList>
            <person name="Ota T."/>
            <person name="Suzuki Y."/>
            <person name="Nishikawa T."/>
            <person name="Otsuki T."/>
            <person name="Sugiyama T."/>
            <person name="Irie R."/>
            <person name="Wakamatsu A."/>
            <person name="Hayashi K."/>
            <person name="Sato H."/>
            <person name="Nagai K."/>
            <person name="Kimura K."/>
            <person name="Makita H."/>
            <person name="Sekine M."/>
            <person name="Obayashi M."/>
            <person name="Nishi T."/>
            <person name="Shibahara T."/>
            <person name="Tanaka T."/>
            <person name="Ishii S."/>
            <person name="Yamamoto J."/>
            <person name="Saito K."/>
            <person name="Kawai Y."/>
            <person name="Isono Y."/>
            <person name="Nakamura Y."/>
            <person name="Nagahari K."/>
            <person name="Murakami K."/>
            <person name="Yasuda T."/>
            <person name="Iwayanagi T."/>
            <person name="Wagatsuma M."/>
            <person name="Shiratori A."/>
            <person name="Sudo H."/>
            <person name="Hosoiri T."/>
            <person name="Kaku Y."/>
            <person name="Kodaira H."/>
            <person name="Kondo H."/>
            <person name="Sugawara M."/>
            <person name="Takahashi M."/>
            <person name="Kanda K."/>
            <person name="Yokoi T."/>
            <person name="Furuya T."/>
            <person name="Kikkawa E."/>
            <person name="Omura Y."/>
            <person name="Abe K."/>
            <person name="Kamihara K."/>
            <person name="Katsuta N."/>
            <person name="Sato K."/>
            <person name="Tanikawa M."/>
            <person name="Yamazaki M."/>
            <person name="Ninomiya K."/>
            <person name="Ishibashi T."/>
            <person name="Yamashita H."/>
            <person name="Murakawa K."/>
            <person name="Fujimori K."/>
            <person name="Tanai H."/>
            <person name="Kimata M."/>
            <person name="Watanabe M."/>
            <person name="Hiraoka S."/>
            <person name="Chiba Y."/>
            <person name="Ishida S."/>
            <person name="Ono Y."/>
            <person name="Takiguchi S."/>
            <person name="Watanabe S."/>
            <person name="Yosida M."/>
            <person name="Hotuta T."/>
            <person name="Kusano J."/>
            <person name="Kanehori K."/>
            <person name="Takahashi-Fujii A."/>
            <person name="Hara H."/>
            <person name="Tanase T.-O."/>
            <person name="Nomura Y."/>
            <person name="Togiya S."/>
            <person name="Komai F."/>
            <person name="Hara R."/>
            <person name="Takeuchi K."/>
            <person name="Arita M."/>
            <person name="Imose N."/>
            <person name="Musashino K."/>
            <person name="Yuuki H."/>
            <person name="Oshima A."/>
            <person name="Sasaki N."/>
            <person name="Aotsuka S."/>
            <person name="Yoshikawa Y."/>
            <person name="Matsunawa H."/>
            <person name="Ichihara T."/>
            <person name="Shiohata N."/>
            <person name="Sano S."/>
            <person name="Moriya S."/>
            <person name="Momiyama H."/>
            <person name="Satoh N."/>
            <person name="Takami S."/>
            <person name="Terashima Y."/>
            <person name="Suzuki O."/>
            <person name="Nakagawa S."/>
            <person name="Senoh A."/>
            <person name="Mizoguchi H."/>
            <person name="Goto Y."/>
            <person name="Shimizu F."/>
            <person name="Wakebe H."/>
            <person name="Hishigaki H."/>
            <person name="Watanabe T."/>
            <person name="Sugiyama A."/>
            <person name="Takemoto M."/>
            <person name="Kawakami B."/>
            <person name="Yamazaki M."/>
            <person name="Watanabe K."/>
            <person name="Kumagai A."/>
            <person name="Itakura S."/>
            <person name="Fukuzumi Y."/>
            <person name="Fujimori Y."/>
            <person name="Komiyama M."/>
            <person name="Tashiro H."/>
            <person name="Tanigami A."/>
            <person name="Fujiwara T."/>
            <person name="Ono T."/>
            <person name="Yamada K."/>
            <person name="Fujii Y."/>
            <person name="Ozaki K."/>
            <person name="Hirao M."/>
            <person name="Ohmori Y."/>
            <person name="Kawabata A."/>
            <person name="Hikiji T."/>
            <person name="Kobatake N."/>
            <person name="Inagaki H."/>
            <person name="Ikema Y."/>
            <person name="Okamoto S."/>
            <person name="Okitani R."/>
            <person name="Kawakami T."/>
            <person name="Noguchi S."/>
            <person name="Itoh T."/>
            <person name="Shigeta K."/>
            <person name="Senba T."/>
            <person name="Matsumura K."/>
            <person name="Nakajima Y."/>
            <person name="Mizuno T."/>
            <person name="Morinaga M."/>
            <person name="Sasaki M."/>
            <person name="Togashi T."/>
            <person name="Oyama M."/>
            <person name="Hata H."/>
            <person name="Watanabe M."/>
            <person name="Komatsu T."/>
            <person name="Mizushima-Sugano J."/>
            <person name="Satoh T."/>
            <person name="Shirai Y."/>
            <person name="Takahashi Y."/>
            <person name="Nakagawa K."/>
            <person name="Okumura K."/>
            <person name="Nagase T."/>
            <person name="Nomura N."/>
            <person name="Kikuchi H."/>
            <person name="Masuho Y."/>
            <person name="Yamashita R."/>
            <person name="Nakai K."/>
            <person name="Yada T."/>
            <person name="Nakamura Y."/>
            <person name="Ohara O."/>
            <person name="Isogai T."/>
            <person name="Sugano S."/>
        </authorList>
    </citation>
    <scope>NUCLEOTIDE SEQUENCE [LARGE SCALE MRNA] (ISOFORMS 1 AND 2)</scope>
    <source>
        <tissue>Testis</tissue>
    </source>
</reference>
<reference key="2">
    <citation type="journal article" date="2005" name="Nature">
        <title>Generation and annotation of the DNA sequences of human chromosomes 2 and 4.</title>
        <authorList>
            <person name="Hillier L.W."/>
            <person name="Graves T.A."/>
            <person name="Fulton R.S."/>
            <person name="Fulton L.A."/>
            <person name="Pepin K.H."/>
            <person name="Minx P."/>
            <person name="Wagner-McPherson C."/>
            <person name="Layman D."/>
            <person name="Wylie K."/>
            <person name="Sekhon M."/>
            <person name="Becker M.C."/>
            <person name="Fewell G.A."/>
            <person name="Delehaunty K.D."/>
            <person name="Miner T.L."/>
            <person name="Nash W.E."/>
            <person name="Kremitzki C."/>
            <person name="Oddy L."/>
            <person name="Du H."/>
            <person name="Sun H."/>
            <person name="Bradshaw-Cordum H."/>
            <person name="Ali J."/>
            <person name="Carter J."/>
            <person name="Cordes M."/>
            <person name="Harris A."/>
            <person name="Isak A."/>
            <person name="van Brunt A."/>
            <person name="Nguyen C."/>
            <person name="Du F."/>
            <person name="Courtney L."/>
            <person name="Kalicki J."/>
            <person name="Ozersky P."/>
            <person name="Abbott S."/>
            <person name="Armstrong J."/>
            <person name="Belter E.A."/>
            <person name="Caruso L."/>
            <person name="Cedroni M."/>
            <person name="Cotton M."/>
            <person name="Davidson T."/>
            <person name="Desai A."/>
            <person name="Elliott G."/>
            <person name="Erb T."/>
            <person name="Fronick C."/>
            <person name="Gaige T."/>
            <person name="Haakenson W."/>
            <person name="Haglund K."/>
            <person name="Holmes A."/>
            <person name="Harkins R."/>
            <person name="Kim K."/>
            <person name="Kruchowski S.S."/>
            <person name="Strong C.M."/>
            <person name="Grewal N."/>
            <person name="Goyea E."/>
            <person name="Hou S."/>
            <person name="Levy A."/>
            <person name="Martinka S."/>
            <person name="Mead K."/>
            <person name="McLellan M.D."/>
            <person name="Meyer R."/>
            <person name="Randall-Maher J."/>
            <person name="Tomlinson C."/>
            <person name="Dauphin-Kohlberg S."/>
            <person name="Kozlowicz-Reilly A."/>
            <person name="Shah N."/>
            <person name="Swearengen-Shahid S."/>
            <person name="Snider J."/>
            <person name="Strong J.T."/>
            <person name="Thompson J."/>
            <person name="Yoakum M."/>
            <person name="Leonard S."/>
            <person name="Pearman C."/>
            <person name="Trani L."/>
            <person name="Radionenko M."/>
            <person name="Waligorski J.E."/>
            <person name="Wang C."/>
            <person name="Rock S.M."/>
            <person name="Tin-Wollam A.-M."/>
            <person name="Maupin R."/>
            <person name="Latreille P."/>
            <person name="Wendl M.C."/>
            <person name="Yang S.-P."/>
            <person name="Pohl C."/>
            <person name="Wallis J.W."/>
            <person name="Spieth J."/>
            <person name="Bieri T.A."/>
            <person name="Berkowicz N."/>
            <person name="Nelson J.O."/>
            <person name="Osborne J."/>
            <person name="Ding L."/>
            <person name="Meyer R."/>
            <person name="Sabo A."/>
            <person name="Shotland Y."/>
            <person name="Sinha P."/>
            <person name="Wohldmann P.E."/>
            <person name="Cook L.L."/>
            <person name="Hickenbotham M.T."/>
            <person name="Eldred J."/>
            <person name="Williams D."/>
            <person name="Jones T.A."/>
            <person name="She X."/>
            <person name="Ciccarelli F.D."/>
            <person name="Izaurralde E."/>
            <person name="Taylor J."/>
            <person name="Schmutz J."/>
            <person name="Myers R.M."/>
            <person name="Cox D.R."/>
            <person name="Huang X."/>
            <person name="McPherson J.D."/>
            <person name="Mardis E.R."/>
            <person name="Clifton S.W."/>
            <person name="Warren W.C."/>
            <person name="Chinwalla A.T."/>
            <person name="Eddy S.R."/>
            <person name="Marra M.A."/>
            <person name="Ovcharenko I."/>
            <person name="Furey T.S."/>
            <person name="Miller W."/>
            <person name="Eichler E.E."/>
            <person name="Bork P."/>
            <person name="Suyama M."/>
            <person name="Torrents D."/>
            <person name="Waterston R.H."/>
            <person name="Wilson R.K."/>
        </authorList>
    </citation>
    <scope>NUCLEOTIDE SEQUENCE [LARGE SCALE GENOMIC DNA]</scope>
</reference>
<reference key="3">
    <citation type="submission" date="2005-09" db="EMBL/GenBank/DDBJ databases">
        <authorList>
            <person name="Mural R.J."/>
            <person name="Istrail S."/>
            <person name="Sutton G."/>
            <person name="Florea L."/>
            <person name="Halpern A.L."/>
            <person name="Mobarry C.M."/>
            <person name="Lippert R."/>
            <person name="Walenz B."/>
            <person name="Shatkay H."/>
            <person name="Dew I."/>
            <person name="Miller J.R."/>
            <person name="Flanigan M.J."/>
            <person name="Edwards N.J."/>
            <person name="Bolanos R."/>
            <person name="Fasulo D."/>
            <person name="Halldorsson B.V."/>
            <person name="Hannenhalli S."/>
            <person name="Turner R."/>
            <person name="Yooseph S."/>
            <person name="Lu F."/>
            <person name="Nusskern D.R."/>
            <person name="Shue B.C."/>
            <person name="Zheng X.H."/>
            <person name="Zhong F."/>
            <person name="Delcher A.L."/>
            <person name="Huson D.H."/>
            <person name="Kravitz S.A."/>
            <person name="Mouchard L."/>
            <person name="Reinert K."/>
            <person name="Remington K.A."/>
            <person name="Clark A.G."/>
            <person name="Waterman M.S."/>
            <person name="Eichler E.E."/>
            <person name="Adams M.D."/>
            <person name="Hunkapiller M.W."/>
            <person name="Myers E.W."/>
            <person name="Venter J.C."/>
        </authorList>
    </citation>
    <scope>NUCLEOTIDE SEQUENCE [LARGE SCALE GENOMIC DNA]</scope>
</reference>
<reference key="4">
    <citation type="journal article" date="2004" name="Genome Res.">
        <title>The status, quality, and expansion of the NIH full-length cDNA project: the Mammalian Gene Collection (MGC).</title>
        <authorList>
            <consortium name="The MGC Project Team"/>
        </authorList>
    </citation>
    <scope>NUCLEOTIDE SEQUENCE [LARGE SCALE MRNA] (ISOFORM 1)</scope>
    <source>
        <tissue>Testis</tissue>
    </source>
</reference>
<reference key="5">
    <citation type="submission" date="2001-05" db="EMBL/GenBank/DDBJ databases">
        <title>Novel isoforms of the cysteine string protein.</title>
        <authorList>
            <person name="Tobaben S."/>
            <person name="Stahl B."/>
        </authorList>
    </citation>
    <scope>NUCLEOTIDE SEQUENCE [MRNA] OF 57-165 (ISOFORM 1)</scope>
</reference>
<dbReference type="EMBL" id="AK097736">
    <property type="protein sequence ID" value="BAC05155.1"/>
    <property type="molecule type" value="mRNA"/>
</dbReference>
<dbReference type="EMBL" id="AK302239">
    <property type="protein sequence ID" value="BAG63591.1"/>
    <property type="molecule type" value="mRNA"/>
</dbReference>
<dbReference type="EMBL" id="AC013413">
    <property type="protein sequence ID" value="AAY24295.1"/>
    <property type="molecule type" value="Genomic_DNA"/>
</dbReference>
<dbReference type="EMBL" id="CH471053">
    <property type="protein sequence ID" value="EAX00608.1"/>
    <property type="molecule type" value="Genomic_DNA"/>
</dbReference>
<dbReference type="EMBL" id="CH471053">
    <property type="protein sequence ID" value="EAX00609.1"/>
    <property type="molecule type" value="Genomic_DNA"/>
</dbReference>
<dbReference type="EMBL" id="BC035194">
    <property type="protein sequence ID" value="AAH35194.2"/>
    <property type="molecule type" value="mRNA"/>
</dbReference>
<dbReference type="EMBL" id="AF368277">
    <property type="protein sequence ID" value="AAK60572.1"/>
    <property type="molecule type" value="mRNA"/>
</dbReference>
<dbReference type="CCDS" id="CCDS1744.1">
    <molecule id="Q8N7S2-1"/>
</dbReference>
<dbReference type="CCDS" id="CCDS77397.1">
    <molecule id="Q8N7S2-2"/>
</dbReference>
<dbReference type="RefSeq" id="NP_001290056.1">
    <molecule id="Q8N7S2-1"/>
    <property type="nucleotide sequence ID" value="NM_001303127.2"/>
</dbReference>
<dbReference type="RefSeq" id="NP_001290057.1">
    <molecule id="Q8N7S2-2"/>
    <property type="nucleotide sequence ID" value="NM_001303128.2"/>
</dbReference>
<dbReference type="RefSeq" id="NP_775921.1">
    <molecule id="Q8N7S2-1"/>
    <property type="nucleotide sequence ID" value="NM_173650.3"/>
</dbReference>
<dbReference type="RefSeq" id="XP_006712058.1">
    <molecule id="Q8N7S2-1"/>
    <property type="nucleotide sequence ID" value="XM_006711995.4"/>
</dbReference>
<dbReference type="RefSeq" id="XP_016859361.1">
    <molecule id="Q8N7S2-1"/>
    <property type="nucleotide sequence ID" value="XM_017003872.3"/>
</dbReference>
<dbReference type="RefSeq" id="XP_016859362.1">
    <molecule id="Q8N7S2-1"/>
    <property type="nucleotide sequence ID" value="XM_017003873.3"/>
</dbReference>
<dbReference type="RefSeq" id="XP_016859363.1">
    <molecule id="Q8N7S2-1"/>
    <property type="nucleotide sequence ID" value="XM_017003874.3"/>
</dbReference>
<dbReference type="RefSeq" id="XP_054197477.1">
    <molecule id="Q8N7S2-1"/>
    <property type="nucleotide sequence ID" value="XM_054341502.1"/>
</dbReference>
<dbReference type="RefSeq" id="XP_054197478.1">
    <molecule id="Q8N7S2-1"/>
    <property type="nucleotide sequence ID" value="XM_054341503.1"/>
</dbReference>
<dbReference type="RefSeq" id="XP_054197479.1">
    <molecule id="Q8N7S2-1"/>
    <property type="nucleotide sequence ID" value="XM_054341504.1"/>
</dbReference>
<dbReference type="RefSeq" id="XP_054197480.1">
    <molecule id="Q8N7S2-1"/>
    <property type="nucleotide sequence ID" value="XM_054341505.1"/>
</dbReference>
<dbReference type="RefSeq" id="XP_054197481.1">
    <molecule id="Q8N7S2-1"/>
    <property type="nucleotide sequence ID" value="XM_054341506.1"/>
</dbReference>
<dbReference type="RefSeq" id="XP_054197482.1">
    <molecule id="Q8N7S2-2"/>
    <property type="nucleotide sequence ID" value="XM_054341507.1"/>
</dbReference>
<dbReference type="SMR" id="Q8N7S2"/>
<dbReference type="BioGRID" id="130021">
    <property type="interactions" value="9"/>
</dbReference>
<dbReference type="FunCoup" id="Q8N7S2">
    <property type="interactions" value="168"/>
</dbReference>
<dbReference type="STRING" id="9606.ENSP00000296097"/>
<dbReference type="iPTMnet" id="Q8N7S2"/>
<dbReference type="PhosphoSitePlus" id="Q8N7S2"/>
<dbReference type="BioMuta" id="DNAJC5G"/>
<dbReference type="DMDM" id="50400554"/>
<dbReference type="MassIVE" id="Q8N7S2"/>
<dbReference type="PaxDb" id="9606-ENSP00000296097"/>
<dbReference type="ProteomicsDB" id="5491"/>
<dbReference type="Antibodypedia" id="28353">
    <property type="antibodies" value="120 antibodies from 23 providers"/>
</dbReference>
<dbReference type="DNASU" id="285126"/>
<dbReference type="Ensembl" id="ENST00000296097.8">
    <molecule id="Q8N7S2-1"/>
    <property type="protein sequence ID" value="ENSP00000296097.3"/>
    <property type="gene ID" value="ENSG00000163793.13"/>
</dbReference>
<dbReference type="Ensembl" id="ENST00000402462.5">
    <molecule id="Q8N7S2-1"/>
    <property type="protein sequence ID" value="ENSP00000384305.1"/>
    <property type="gene ID" value="ENSG00000163793.13"/>
</dbReference>
<dbReference type="Ensembl" id="ENST00000406962.1">
    <molecule id="Q8N7S2-2"/>
    <property type="protein sequence ID" value="ENSP00000385533.1"/>
    <property type="gene ID" value="ENSG00000163793.13"/>
</dbReference>
<dbReference type="GeneID" id="285126"/>
<dbReference type="KEGG" id="hsa:285126"/>
<dbReference type="MANE-Select" id="ENST00000296097.8">
    <property type="protein sequence ID" value="ENSP00000296097.3"/>
    <property type="RefSeq nucleotide sequence ID" value="NM_173650.3"/>
    <property type="RefSeq protein sequence ID" value="NP_775921.1"/>
</dbReference>
<dbReference type="UCSC" id="uc002rjl.2">
    <molecule id="Q8N7S2-1"/>
    <property type="organism name" value="human"/>
</dbReference>
<dbReference type="AGR" id="HGNC:24844"/>
<dbReference type="CTD" id="285126"/>
<dbReference type="GeneCards" id="DNAJC5G"/>
<dbReference type="HGNC" id="HGNC:24844">
    <property type="gene designation" value="DNAJC5G"/>
</dbReference>
<dbReference type="HPA" id="ENSG00000163793">
    <property type="expression patterns" value="Group enriched (epididymis, testis)"/>
</dbReference>
<dbReference type="MIM" id="613946">
    <property type="type" value="gene"/>
</dbReference>
<dbReference type="neXtProt" id="NX_Q8N7S2"/>
<dbReference type="OpenTargets" id="ENSG00000163793"/>
<dbReference type="PharmGKB" id="PA134880296"/>
<dbReference type="VEuPathDB" id="HostDB:ENSG00000163793"/>
<dbReference type="eggNOG" id="KOG0716">
    <property type="taxonomic scope" value="Eukaryota"/>
</dbReference>
<dbReference type="GeneTree" id="ENSGT00940000162434"/>
<dbReference type="HOGENOM" id="CLU_2249162_0_0_1"/>
<dbReference type="InParanoid" id="Q8N7S2"/>
<dbReference type="OMA" id="FIMNSCW"/>
<dbReference type="OrthoDB" id="445556at2759"/>
<dbReference type="PAN-GO" id="Q8N7S2">
    <property type="GO annotations" value="0 GO annotations based on evolutionary models"/>
</dbReference>
<dbReference type="PhylomeDB" id="Q8N7S2"/>
<dbReference type="TreeFam" id="TF105164"/>
<dbReference type="PathwayCommons" id="Q8N7S2"/>
<dbReference type="BioGRID-ORCS" id="285126">
    <property type="hits" value="15 hits in 1147 CRISPR screens"/>
</dbReference>
<dbReference type="GenomeRNAi" id="285126"/>
<dbReference type="Pharos" id="Q8N7S2">
    <property type="development level" value="Tdark"/>
</dbReference>
<dbReference type="PRO" id="PR:Q8N7S2"/>
<dbReference type="Proteomes" id="UP000005640">
    <property type="component" value="Chromosome 2"/>
</dbReference>
<dbReference type="RNAct" id="Q8N7S2">
    <property type="molecule type" value="protein"/>
</dbReference>
<dbReference type="Bgee" id="ENSG00000163793">
    <property type="expression patterns" value="Expressed in left testis and 78 other cell types or tissues"/>
</dbReference>
<dbReference type="ExpressionAtlas" id="Q8N7S2">
    <property type="expression patterns" value="baseline and differential"/>
</dbReference>
<dbReference type="GO" id="GO:0005737">
    <property type="term" value="C:cytoplasm"/>
    <property type="evidence" value="ECO:0007669"/>
    <property type="project" value="UniProtKB-ARBA"/>
</dbReference>
<dbReference type="GO" id="GO:0016020">
    <property type="term" value="C:membrane"/>
    <property type="evidence" value="ECO:0007669"/>
    <property type="project" value="UniProtKB-SubCell"/>
</dbReference>
<dbReference type="CDD" id="cd06257">
    <property type="entry name" value="DnaJ"/>
    <property type="match status" value="1"/>
</dbReference>
<dbReference type="Gene3D" id="1.10.287.110">
    <property type="entry name" value="DnaJ domain"/>
    <property type="match status" value="1"/>
</dbReference>
<dbReference type="InterPro" id="IPR051434">
    <property type="entry name" value="DnaJ_C_subfamily_member5"/>
</dbReference>
<dbReference type="InterPro" id="IPR001623">
    <property type="entry name" value="DnaJ_domain"/>
</dbReference>
<dbReference type="InterPro" id="IPR018253">
    <property type="entry name" value="DnaJ_domain_CS"/>
</dbReference>
<dbReference type="InterPro" id="IPR036869">
    <property type="entry name" value="J_dom_sf"/>
</dbReference>
<dbReference type="PANTHER" id="PTHR44027">
    <property type="entry name" value="DNAJ HOMOLOG SUBFAMILY C MEMBER 5 HOMOLOG"/>
    <property type="match status" value="1"/>
</dbReference>
<dbReference type="PANTHER" id="PTHR44027:SF2">
    <property type="entry name" value="DNAJ HOMOLOG SUBFAMILY C MEMBER 5G"/>
    <property type="match status" value="1"/>
</dbReference>
<dbReference type="Pfam" id="PF00226">
    <property type="entry name" value="DnaJ"/>
    <property type="match status" value="1"/>
</dbReference>
<dbReference type="PRINTS" id="PR00625">
    <property type="entry name" value="JDOMAIN"/>
</dbReference>
<dbReference type="SMART" id="SM00271">
    <property type="entry name" value="DnaJ"/>
    <property type="match status" value="1"/>
</dbReference>
<dbReference type="SUPFAM" id="SSF46565">
    <property type="entry name" value="Chaperone J-domain"/>
    <property type="match status" value="2"/>
</dbReference>
<dbReference type="PROSITE" id="PS00636">
    <property type="entry name" value="DNAJ_1"/>
    <property type="match status" value="1"/>
</dbReference>
<dbReference type="PROSITE" id="PS50076">
    <property type="entry name" value="DNAJ_2"/>
    <property type="match status" value="1"/>
</dbReference>
<protein>
    <recommendedName>
        <fullName>DnaJ homolog subfamily C member 5G</fullName>
    </recommendedName>
    <alternativeName>
        <fullName>Cysteine string protein-gamma</fullName>
        <shortName>CSP-gamma</shortName>
    </alternativeName>
</protein>
<gene>
    <name type="primary">DNAJC5G</name>
</gene>